<keyword id="KW-1015">Disulfide bond</keyword>
<keyword id="KW-0274">FAD</keyword>
<keyword id="KW-0285">Flavoprotein</keyword>
<keyword id="KW-0349">Heme</keyword>
<keyword id="KW-0408">Iron</keyword>
<keyword id="KW-0479">Metal-binding</keyword>
<keyword id="KW-0500">Molybdenum</keyword>
<keyword id="KW-0520">NAD</keyword>
<keyword id="KW-0534">Nitrate assimilation</keyword>
<keyword id="KW-0560">Oxidoreductase</keyword>
<keyword id="KW-1185">Reference proteome</keyword>
<protein>
    <recommendedName>
        <fullName>Nitrate reductase [NADH]</fullName>
        <shortName>NR</shortName>
        <ecNumber>1.7.1.1</ecNumber>
    </recommendedName>
</protein>
<name>NIA_CUCMA</name>
<accession>P17569</accession>
<proteinExistence type="evidence at transcript level"/>
<dbReference type="EC" id="1.7.1.1"/>
<dbReference type="EMBL" id="M33154">
    <property type="protein sequence ID" value="AAA33114.1"/>
    <property type="molecule type" value="mRNA"/>
</dbReference>
<dbReference type="PIR" id="A41667">
    <property type="entry name" value="A41667"/>
</dbReference>
<dbReference type="SMR" id="P17569"/>
<dbReference type="Proteomes" id="UP000504608">
    <property type="component" value="Unplaced"/>
</dbReference>
<dbReference type="GO" id="GO:0071949">
    <property type="term" value="F:FAD binding"/>
    <property type="evidence" value="ECO:0000250"/>
    <property type="project" value="UniProtKB"/>
</dbReference>
<dbReference type="GO" id="GO:0020037">
    <property type="term" value="F:heme binding"/>
    <property type="evidence" value="ECO:0007669"/>
    <property type="project" value="InterPro"/>
</dbReference>
<dbReference type="GO" id="GO:0030151">
    <property type="term" value="F:molybdenum ion binding"/>
    <property type="evidence" value="ECO:0000250"/>
    <property type="project" value="UniProtKB"/>
</dbReference>
<dbReference type="GO" id="GO:0043546">
    <property type="term" value="F:molybdopterin cofactor binding"/>
    <property type="evidence" value="ECO:0007669"/>
    <property type="project" value="InterPro"/>
</dbReference>
<dbReference type="GO" id="GO:0009703">
    <property type="term" value="F:nitrate reductase (NADH) activity"/>
    <property type="evidence" value="ECO:0007669"/>
    <property type="project" value="UniProtKB-EC"/>
</dbReference>
<dbReference type="GO" id="GO:0050464">
    <property type="term" value="F:nitrate reductase (NADPH) activity"/>
    <property type="evidence" value="ECO:0007669"/>
    <property type="project" value="InterPro"/>
</dbReference>
<dbReference type="GO" id="GO:0008482">
    <property type="term" value="F:sulfite oxidase activity"/>
    <property type="evidence" value="ECO:0007669"/>
    <property type="project" value="TreeGrafter"/>
</dbReference>
<dbReference type="GO" id="GO:0042128">
    <property type="term" value="P:nitrate assimilation"/>
    <property type="evidence" value="ECO:0007669"/>
    <property type="project" value="UniProtKB-KW"/>
</dbReference>
<dbReference type="GO" id="GO:0006809">
    <property type="term" value="P:nitric oxide biosynthetic process"/>
    <property type="evidence" value="ECO:0007669"/>
    <property type="project" value="InterPro"/>
</dbReference>
<dbReference type="GO" id="GO:0006790">
    <property type="term" value="P:sulfur compound metabolic process"/>
    <property type="evidence" value="ECO:0007669"/>
    <property type="project" value="TreeGrafter"/>
</dbReference>
<dbReference type="CDD" id="cd06183">
    <property type="entry name" value="cyt_b5_reduct_like"/>
    <property type="match status" value="1"/>
</dbReference>
<dbReference type="CDD" id="cd02112">
    <property type="entry name" value="eukary_NR_Moco"/>
    <property type="match status" value="1"/>
</dbReference>
<dbReference type="FunFam" id="2.40.30.10:FF:000021">
    <property type="entry name" value="NADH-cytochrome b5 reductase"/>
    <property type="match status" value="1"/>
</dbReference>
<dbReference type="FunFam" id="2.60.40.650:FF:000001">
    <property type="entry name" value="Nitrate reductase"/>
    <property type="match status" value="1"/>
</dbReference>
<dbReference type="FunFam" id="3.10.120.10:FF:000008">
    <property type="entry name" value="Nitrate reductase"/>
    <property type="match status" value="1"/>
</dbReference>
<dbReference type="FunFam" id="3.90.420.10:FF:000003">
    <property type="entry name" value="Nitrate reductase"/>
    <property type="match status" value="1"/>
</dbReference>
<dbReference type="FunFam" id="3.40.50.80:FF:000025">
    <property type="entry name" value="Nitrate reductase [NADH]"/>
    <property type="match status" value="1"/>
</dbReference>
<dbReference type="Gene3D" id="2.60.40.650">
    <property type="match status" value="1"/>
</dbReference>
<dbReference type="Gene3D" id="3.10.120.10">
    <property type="entry name" value="Cytochrome b5-like heme/steroid binding domain"/>
    <property type="match status" value="1"/>
</dbReference>
<dbReference type="Gene3D" id="3.40.50.80">
    <property type="entry name" value="Nucleotide-binding domain of ferredoxin-NADP reductase (FNR) module"/>
    <property type="match status" value="1"/>
</dbReference>
<dbReference type="Gene3D" id="3.90.420.10">
    <property type="entry name" value="Oxidoreductase, molybdopterin-binding domain"/>
    <property type="match status" value="1"/>
</dbReference>
<dbReference type="Gene3D" id="2.40.30.10">
    <property type="entry name" value="Translation factors"/>
    <property type="match status" value="1"/>
</dbReference>
<dbReference type="InterPro" id="IPR008333">
    <property type="entry name" value="Cbr1-like_FAD-bd_dom"/>
</dbReference>
<dbReference type="InterPro" id="IPR001199">
    <property type="entry name" value="Cyt_B5-like_heme/steroid-bd"/>
</dbReference>
<dbReference type="InterPro" id="IPR036400">
    <property type="entry name" value="Cyt_B5-like_heme/steroid_sf"/>
</dbReference>
<dbReference type="InterPro" id="IPR018506">
    <property type="entry name" value="Cyt_B5_heme-BS"/>
</dbReference>
<dbReference type="InterPro" id="IPR017927">
    <property type="entry name" value="FAD-bd_FR_type"/>
</dbReference>
<dbReference type="InterPro" id="IPR001709">
    <property type="entry name" value="Flavoprot_Pyr_Nucl_cyt_Rdtase"/>
</dbReference>
<dbReference type="InterPro" id="IPR039261">
    <property type="entry name" value="FNR_nucleotide-bd"/>
</dbReference>
<dbReference type="InterPro" id="IPR014756">
    <property type="entry name" value="Ig_E-set"/>
</dbReference>
<dbReference type="InterPro" id="IPR005066">
    <property type="entry name" value="MoCF_OxRdtse_dimer"/>
</dbReference>
<dbReference type="InterPro" id="IPR008335">
    <property type="entry name" value="Mopterin_OxRdtase_euk"/>
</dbReference>
<dbReference type="InterPro" id="IPR012137">
    <property type="entry name" value="Nitr_rd_NADH"/>
</dbReference>
<dbReference type="InterPro" id="IPR001433">
    <property type="entry name" value="OxRdtase_FAD/NAD-bd"/>
</dbReference>
<dbReference type="InterPro" id="IPR000572">
    <property type="entry name" value="OxRdtase_Mopterin-bd_dom"/>
</dbReference>
<dbReference type="InterPro" id="IPR036374">
    <property type="entry name" value="OxRdtase_Mopterin-bd_sf"/>
</dbReference>
<dbReference type="InterPro" id="IPR022407">
    <property type="entry name" value="OxRdtase_Mopterin_BS"/>
</dbReference>
<dbReference type="InterPro" id="IPR017938">
    <property type="entry name" value="Riboflavin_synthase-like_b-brl"/>
</dbReference>
<dbReference type="PANTHER" id="PTHR19372:SF7">
    <property type="entry name" value="SULFITE OXIDASE, MITOCHONDRIAL"/>
    <property type="match status" value="1"/>
</dbReference>
<dbReference type="PANTHER" id="PTHR19372">
    <property type="entry name" value="SULFITE REDUCTASE"/>
    <property type="match status" value="1"/>
</dbReference>
<dbReference type="Pfam" id="PF00173">
    <property type="entry name" value="Cyt-b5"/>
    <property type="match status" value="1"/>
</dbReference>
<dbReference type="Pfam" id="PF00970">
    <property type="entry name" value="FAD_binding_6"/>
    <property type="match status" value="1"/>
</dbReference>
<dbReference type="Pfam" id="PF03404">
    <property type="entry name" value="Mo-co_dimer"/>
    <property type="match status" value="1"/>
</dbReference>
<dbReference type="Pfam" id="PF00175">
    <property type="entry name" value="NAD_binding_1"/>
    <property type="match status" value="1"/>
</dbReference>
<dbReference type="Pfam" id="PF00174">
    <property type="entry name" value="Oxidored_molyb"/>
    <property type="match status" value="1"/>
</dbReference>
<dbReference type="PIRSF" id="PIRSF000233">
    <property type="entry name" value="Nitr_rd_NADH"/>
    <property type="match status" value="1"/>
</dbReference>
<dbReference type="PRINTS" id="PR00406">
    <property type="entry name" value="CYTB5RDTASE"/>
</dbReference>
<dbReference type="PRINTS" id="PR00363">
    <property type="entry name" value="CYTOCHROMEB5"/>
</dbReference>
<dbReference type="PRINTS" id="PR00407">
    <property type="entry name" value="EUMOPTERIN"/>
</dbReference>
<dbReference type="PRINTS" id="PR00371">
    <property type="entry name" value="FPNCR"/>
</dbReference>
<dbReference type="SMART" id="SM01117">
    <property type="entry name" value="Cyt-b5"/>
    <property type="match status" value="1"/>
</dbReference>
<dbReference type="SUPFAM" id="SSF55856">
    <property type="entry name" value="Cytochrome b5-like heme/steroid binding domain"/>
    <property type="match status" value="1"/>
</dbReference>
<dbReference type="SUPFAM" id="SSF81296">
    <property type="entry name" value="E set domains"/>
    <property type="match status" value="1"/>
</dbReference>
<dbReference type="SUPFAM" id="SSF52343">
    <property type="entry name" value="Ferredoxin reductase-like, C-terminal NADP-linked domain"/>
    <property type="match status" value="1"/>
</dbReference>
<dbReference type="SUPFAM" id="SSF56524">
    <property type="entry name" value="Oxidoreductase molybdopterin-binding domain"/>
    <property type="match status" value="1"/>
</dbReference>
<dbReference type="SUPFAM" id="SSF63380">
    <property type="entry name" value="Riboflavin synthase domain-like"/>
    <property type="match status" value="1"/>
</dbReference>
<dbReference type="PROSITE" id="PS00191">
    <property type="entry name" value="CYTOCHROME_B5_1"/>
    <property type="match status" value="1"/>
</dbReference>
<dbReference type="PROSITE" id="PS50255">
    <property type="entry name" value="CYTOCHROME_B5_2"/>
    <property type="match status" value="1"/>
</dbReference>
<dbReference type="PROSITE" id="PS51384">
    <property type="entry name" value="FAD_FR"/>
    <property type="match status" value="1"/>
</dbReference>
<dbReference type="PROSITE" id="PS00559">
    <property type="entry name" value="MOLYBDOPTERIN_EUK"/>
    <property type="match status" value="1"/>
</dbReference>
<sequence length="918" mass="103384">MAASVDNRQYGPLQPPLSGVVRSFKNGPNHRADSPVRGCNFPNSNVDYNNNRPLKSSVKIQEAAAEEMEDSCSEDENENEFRDLIVKGNRELEPSILDHRDEGTADNWIERNASMVRLTGKHPFNSEPPLNRLMHHGFITPVPLHYVRNHGVVPKAKWADWTVEVCGLVKRPAKFTMDQLLNEFRFREFPATLVCAGNRRKEQNMVKQSIGFNWGAAGVSTSVWRRVPLCDLLKRCGILSRKKGALNVCFEGAEDLPGGGGSKYGTSIKKELAMDPARDIILAYMQNGEQLAPDHGFPVRMIIPGFIGGRMVKWLKRIIVTTKESENYYHFKDNRVLPSHVDADVANAEAWWYKPEHIINELNINSVITTPCHEEILPINAWTTQRPYTLRGYSYSGGGKKVTRVEVTMDSGETWQVCTLDHPEKANKYGKYWCWCFWSLEVEVLDLLSAKEIAVRAWDETHNTQPEKLIWNLMGMMNNCWFRVKTNMCKPHKGEIGIVFEHPTQPGNQSGGWMDRERHLEISTESNQTLKKSVSTPFMNTASNTYTLSEVKKHNSPQSAWIIVHGHVYDCTRFLKDHPGGSDSILINAGTDCTEEFDAIHSDKAKKMLEDYRIGELITTGYASDSSSNSPNNSTHGASNFSHLAPIREAPVSRRVALAPNEKIPCKLISKTSISHDVRVFRFALPGGQDQALGLPVGKHIFICATVDGKLCMRAYTPTSSIDEMGFFELVVKVYFKGVHPKFPNGGIMSQYLDSMEVGSTLDVKGPLGHIEYTGRGNFMVHGKPRFARRLAMLAGGTGITPIYQVVQAILKDPEDETEMYVVYANRTEDDILLRDELDTWAKKNQRLKVWYVVQESIREGWEYSVGFITENILREHIPAAAEDTLALACGPPAMIQFAVQPNLEKMNYDTKNSLLVF</sequence>
<comment type="function">
    <text>Nitrate reductase is a key enzyme involved in the first step of nitrate assimilation in plants, fungi and bacteria.</text>
</comment>
<comment type="catalytic activity">
    <reaction>
        <text>nitrite + NAD(+) + H2O = nitrate + NADH + H(+)</text>
        <dbReference type="Rhea" id="RHEA:17913"/>
        <dbReference type="ChEBI" id="CHEBI:15377"/>
        <dbReference type="ChEBI" id="CHEBI:15378"/>
        <dbReference type="ChEBI" id="CHEBI:16301"/>
        <dbReference type="ChEBI" id="CHEBI:17632"/>
        <dbReference type="ChEBI" id="CHEBI:57540"/>
        <dbReference type="ChEBI" id="CHEBI:57945"/>
        <dbReference type="EC" id="1.7.1.1"/>
    </reaction>
</comment>
<comment type="cofactor">
    <cofactor evidence="1">
        <name>FAD</name>
        <dbReference type="ChEBI" id="CHEBI:57692"/>
    </cofactor>
    <text evidence="1">Binds 1 FAD per subunit.</text>
</comment>
<comment type="cofactor">
    <cofactor evidence="1">
        <name>heme</name>
        <dbReference type="ChEBI" id="CHEBI:30413"/>
    </cofactor>
    <text evidence="1">Binds 1 heme group per subunit.</text>
</comment>
<comment type="cofactor">
    <cofactor evidence="1">
        <name>Mo-molybdopterin</name>
        <dbReference type="ChEBI" id="CHEBI:71302"/>
    </cofactor>
    <text evidence="1">Binds 1 Mo-molybdopterin (Mo-MPT) cofactor per subunit.</text>
</comment>
<comment type="subunit">
    <text>Homodimer.</text>
</comment>
<comment type="induction">
    <text>By nitrate.</text>
</comment>
<comment type="similarity">
    <text evidence="9">Belongs to the nitrate reductase family.</text>
</comment>
<feature type="chain" id="PRO_0000166055" description="Nitrate reductase [NADH]">
    <location>
        <begin position="1"/>
        <end position="918"/>
    </location>
</feature>
<feature type="domain" description="Cytochrome b5 heme-binding" evidence="6">
    <location>
        <begin position="543"/>
        <end position="618"/>
    </location>
</feature>
<feature type="domain" description="FAD-binding FR-type" evidence="7">
    <location>
        <begin position="661"/>
        <end position="774"/>
    </location>
</feature>
<feature type="region of interest" description="Disordered" evidence="8">
    <location>
        <begin position="25"/>
        <end position="44"/>
    </location>
</feature>
<feature type="binding site" evidence="4">
    <location>
        <position position="195"/>
    </location>
    <ligand>
        <name>Mo-molybdopterin</name>
        <dbReference type="ChEBI" id="CHEBI:71302"/>
    </ligand>
    <ligandPart>
        <name>Mo</name>
        <dbReference type="ChEBI" id="CHEBI:28685"/>
    </ligandPart>
</feature>
<feature type="binding site" description="axial binding residue" evidence="6">
    <location>
        <position position="578"/>
    </location>
    <ligand>
        <name>heme</name>
        <dbReference type="ChEBI" id="CHEBI:30413"/>
    </ligand>
    <ligandPart>
        <name>Fe</name>
        <dbReference type="ChEBI" id="CHEBI:18248"/>
    </ligandPart>
</feature>
<feature type="binding site" description="axial binding residue" evidence="6">
    <location>
        <position position="601"/>
    </location>
    <ligand>
        <name>heme</name>
        <dbReference type="ChEBI" id="CHEBI:30413"/>
    </ligand>
    <ligandPart>
        <name>Fe</name>
        <dbReference type="ChEBI" id="CHEBI:18248"/>
    </ligandPart>
</feature>
<feature type="binding site" evidence="2">
    <location>
        <begin position="714"/>
        <end position="717"/>
    </location>
    <ligand>
        <name>FAD</name>
        <dbReference type="ChEBI" id="CHEBI:57692"/>
    </ligand>
</feature>
<feature type="binding site" evidence="2">
    <location>
        <begin position="731"/>
        <end position="735"/>
    </location>
    <ligand>
        <name>FAD</name>
        <dbReference type="ChEBI" id="CHEBI:57692"/>
    </ligand>
</feature>
<feature type="binding site" evidence="3">
    <location>
        <position position="736"/>
    </location>
    <ligand>
        <name>FAD</name>
        <dbReference type="ChEBI" id="CHEBI:57692"/>
    </ligand>
</feature>
<feature type="binding site" evidence="2">
    <location>
        <position position="743"/>
    </location>
    <ligand>
        <name>FAD</name>
        <dbReference type="ChEBI" id="CHEBI:57692"/>
    </ligand>
</feature>
<feature type="binding site" evidence="2">
    <location>
        <begin position="748"/>
        <end position="750"/>
    </location>
    <ligand>
        <name>FAD</name>
        <dbReference type="ChEBI" id="CHEBI:57692"/>
    </ligand>
</feature>
<feature type="binding site" evidence="2">
    <location>
        <position position="801"/>
    </location>
    <ligand>
        <name>FAD</name>
        <dbReference type="ChEBI" id="CHEBI:57692"/>
    </ligand>
</feature>
<feature type="disulfide bond" description="Interchain" evidence="5">
    <location>
        <position position="434"/>
    </location>
</feature>
<organism>
    <name type="scientific">Cucurbita maxima</name>
    <name type="common">Pumpkin</name>
    <name type="synonym">Winter squash</name>
    <dbReference type="NCBI Taxonomy" id="3661"/>
    <lineage>
        <taxon>Eukaryota</taxon>
        <taxon>Viridiplantae</taxon>
        <taxon>Streptophyta</taxon>
        <taxon>Embryophyta</taxon>
        <taxon>Tracheophyta</taxon>
        <taxon>Spermatophyta</taxon>
        <taxon>Magnoliopsida</taxon>
        <taxon>eudicotyledons</taxon>
        <taxon>Gunneridae</taxon>
        <taxon>Pentapetalae</taxon>
        <taxon>rosids</taxon>
        <taxon>fabids</taxon>
        <taxon>Cucurbitales</taxon>
        <taxon>Cucurbitaceae</taxon>
        <taxon>Cucurbiteae</taxon>
        <taxon>Cucurbita</taxon>
    </lineage>
</organism>
<evidence type="ECO:0000250" key="1"/>
<evidence type="ECO:0000250" key="2">
    <source>
        <dbReference type="UniProtKB" id="A0A286R227"/>
    </source>
</evidence>
<evidence type="ECO:0000250" key="3">
    <source>
        <dbReference type="UniProtKB" id="P17571"/>
    </source>
</evidence>
<evidence type="ECO:0000250" key="4">
    <source>
        <dbReference type="UniProtKB" id="P49050"/>
    </source>
</evidence>
<evidence type="ECO:0000255" key="5"/>
<evidence type="ECO:0000255" key="6">
    <source>
        <dbReference type="PROSITE-ProRule" id="PRU00279"/>
    </source>
</evidence>
<evidence type="ECO:0000255" key="7">
    <source>
        <dbReference type="PROSITE-ProRule" id="PRU00716"/>
    </source>
</evidence>
<evidence type="ECO:0000256" key="8">
    <source>
        <dbReference type="SAM" id="MobiDB-lite"/>
    </source>
</evidence>
<evidence type="ECO:0000305" key="9"/>
<reference key="1">
    <citation type="journal article" date="1986" name="Proc. Natl. Acad. Sci. U.S.A.">
        <title>Nitrate reductase from squash: cDNA cloning and nitrate regulation.</title>
        <authorList>
            <person name="Crawford N.M."/>
            <person name="Campbell W.H."/>
            <person name="Davis R."/>
        </authorList>
    </citation>
    <scope>NUCLEOTIDE SEQUENCE [MRNA]</scope>
</reference>
<reference key="2">
    <citation type="journal article" date="1991" name="J. Biol. Chem.">
        <title>The sequence of squash NADH:nitrate reductase and its relationship to the sequences of other flavoprotein oxidoreductases. A family of flavoprotein pyridine nucleotide cytochrome reductases.</title>
        <authorList>
            <person name="Hyde G.E."/>
            <person name="Crawford N.M."/>
            <person name="Campbell W.H."/>
        </authorList>
    </citation>
    <scope>NUCLEOTIDE SEQUENCE [MRNA]</scope>
    <source>
        <tissue>Seedling</tissue>
    </source>
</reference>